<proteinExistence type="evidence at protein level"/>
<sequence length="451" mass="48733">MNTTAYASPPRDMHPRSTMPSLHDTTYRSGPPHQGAPYSMPQTMASQHSTISAYEQYNNSLPVSRPPPPEHLPSSEAVSSFSIGLPGQEPSPRSITVDGRKYTLEVQQQPKRARMCGFGDKDRRPITPPPCVKLSITEIATGKEVDVNNIEHGMFVLNVDLWSADGERPVNLVRHSQTSPSISATVPVSYTQIQGGAAAYSSLLPGQSQREPTSPTYGSAPPFQGAGFSPFPGPPQVSAYSQQQPGQQSGYGGNPNYPPPNGYQVAPQQSNYYYPQPSQSIPSHNNQDPYPSRPFTPQDLGIGRIPISQTNPPQGMFTRNLIGSLSASAFRLTDPDDRIGIWFVLQDLSVRTEGDFRLRFSFVNVGVPSAPQNNANSSCSVNTGKAPVLASCFSEVFKVYSAKKFPGVVESTPLSKCFATQGIKIPIRKDGKDGPGKGGKDGSRGDDDDDY</sequence>
<organism>
    <name type="scientific">Botryotinia fuckeliana (strain B05.10)</name>
    <name type="common">Noble rot fungus</name>
    <name type="synonym">Botrytis cinerea</name>
    <dbReference type="NCBI Taxonomy" id="332648"/>
    <lineage>
        <taxon>Eukaryota</taxon>
        <taxon>Fungi</taxon>
        <taxon>Dikarya</taxon>
        <taxon>Ascomycota</taxon>
        <taxon>Pezizomycotina</taxon>
        <taxon>Leotiomycetes</taxon>
        <taxon>Helotiales</taxon>
        <taxon>Sclerotiniaceae</taxon>
        <taxon>Botrytis</taxon>
    </lineage>
</organism>
<gene>
    <name evidence="7" type="primary">VEL2</name>
    <name evidence="8" type="synonym">velB</name>
</gene>
<protein>
    <recommendedName>
        <fullName evidence="9">Velvet complex subunit 2</fullName>
    </recommendedName>
</protein>
<dbReference type="EMBL" id="HE977591">
    <property type="protein sequence ID" value="CCK35906.1"/>
    <property type="molecule type" value="Genomic_DNA"/>
</dbReference>
<dbReference type="SMR" id="L0PQJ9"/>
<dbReference type="EnsemblFungi" id="Bcin01g02730.1">
    <property type="protein sequence ID" value="Bcin01p02730.1"/>
    <property type="gene ID" value="Bcin01g02730"/>
</dbReference>
<dbReference type="VEuPathDB" id="FungiDB:Bcin01g02730"/>
<dbReference type="OrthoDB" id="1746739at2759"/>
<dbReference type="GO" id="GO:0005737">
    <property type="term" value="C:cytoplasm"/>
    <property type="evidence" value="ECO:0007669"/>
    <property type="project" value="UniProtKB-SubCell"/>
</dbReference>
<dbReference type="GO" id="GO:0005634">
    <property type="term" value="C:nucleus"/>
    <property type="evidence" value="ECO:0007669"/>
    <property type="project" value="UniProtKB-SubCell"/>
</dbReference>
<dbReference type="GO" id="GO:0030435">
    <property type="term" value="P:sporulation resulting in formation of a cellular spore"/>
    <property type="evidence" value="ECO:0007669"/>
    <property type="project" value="UniProtKB-KW"/>
</dbReference>
<dbReference type="Gene3D" id="2.60.40.3960">
    <property type="entry name" value="Velvet domain"/>
    <property type="match status" value="2"/>
</dbReference>
<dbReference type="InterPro" id="IPR021740">
    <property type="entry name" value="Velvet"/>
</dbReference>
<dbReference type="InterPro" id="IPR037525">
    <property type="entry name" value="Velvet_dom"/>
</dbReference>
<dbReference type="InterPro" id="IPR038491">
    <property type="entry name" value="Velvet_dom_sf"/>
</dbReference>
<dbReference type="PANTHER" id="PTHR33572">
    <property type="entry name" value="SPORE DEVELOPMENT REGULATOR VOSA"/>
    <property type="match status" value="1"/>
</dbReference>
<dbReference type="PANTHER" id="PTHR33572:SF3">
    <property type="entry name" value="VELVET COMPLEX SUBUNIT B"/>
    <property type="match status" value="1"/>
</dbReference>
<dbReference type="Pfam" id="PF11754">
    <property type="entry name" value="Velvet"/>
    <property type="match status" value="1"/>
</dbReference>
<dbReference type="PROSITE" id="PS51821">
    <property type="entry name" value="VELVET"/>
    <property type="match status" value="1"/>
</dbReference>
<name>VELB_BOTFB</name>
<reference key="1">
    <citation type="journal article" date="2012" name="PLoS ONE">
        <title>Natural variation in the VELVET gene bcvel1 affects virulence and light-dependent differentiation in Botrytis cinerea.</title>
        <authorList>
            <person name="Schumacher J."/>
            <person name="Pradier J.M."/>
            <person name="Simon A."/>
            <person name="Traeger S."/>
            <person name="Moraga J."/>
            <person name="Collado I.G."/>
            <person name="Viaud M."/>
            <person name="Tudzynski B."/>
        </authorList>
    </citation>
    <scope>NUCLEOTIDE SEQUENCE [GENOMIC DNA]</scope>
    <scope>FUNCTION</scope>
    <scope>DISRUPTION PHENOTYPE</scope>
    <source>
        <strain>B05.10</strain>
    </source>
</reference>
<reference key="2">
    <citation type="journal article" date="2013" name="Fungal Genet. Biol.">
        <title>Involvement of BcVeA and BcVelB in regulating conidiation, pigmentation and virulence in Botrytis cinerea.</title>
        <authorList>
            <person name="Yang Q."/>
            <person name="Chen Y."/>
            <person name="Ma Z."/>
        </authorList>
    </citation>
    <scope>FUNCTION</scope>
    <scope>DISRUPTION PHENOTYPE</scope>
</reference>
<reference key="3">
    <citation type="journal article" date="2015" name="Mol. Plant Microbe Interact.">
        <title>The VELVET complex in the gray mold fungus Botrytis cinerea: impact of BcLAE1 on differentiation, secondary metabolism, and virulence.</title>
        <authorList>
            <person name="Schumacher J."/>
            <person name="Simon A."/>
            <person name="Cohrs K.C."/>
            <person name="Traeger S."/>
            <person name="Porquier A."/>
            <person name="Dalmais B."/>
            <person name="Viaud M."/>
            <person name="Tudzynski B."/>
        </authorList>
    </citation>
    <scope>IDENTIFICATION IN THE VELVET COMPLEX</scope>
</reference>
<evidence type="ECO:0000250" key="1">
    <source>
        <dbReference type="UniProtKB" id="C8VTS4"/>
    </source>
</evidence>
<evidence type="ECO:0000255" key="2">
    <source>
        <dbReference type="PROSITE-ProRule" id="PRU01165"/>
    </source>
</evidence>
<evidence type="ECO:0000256" key="3">
    <source>
        <dbReference type="SAM" id="MobiDB-lite"/>
    </source>
</evidence>
<evidence type="ECO:0000269" key="4">
    <source>
    </source>
</evidence>
<evidence type="ECO:0000269" key="5">
    <source>
    </source>
</evidence>
<evidence type="ECO:0000269" key="6">
    <source>
    </source>
</evidence>
<evidence type="ECO:0000303" key="7">
    <source>
    </source>
</evidence>
<evidence type="ECO:0000303" key="8">
    <source>
    </source>
</evidence>
<evidence type="ECO:0000305" key="9"/>
<feature type="chain" id="PRO_0000435781" description="Velvet complex subunit 2">
    <location>
        <begin position="1"/>
        <end position="451"/>
    </location>
</feature>
<feature type="domain" description="Velvet" evidence="2">
    <location>
        <begin position="92"/>
        <end position="428"/>
    </location>
</feature>
<feature type="region of interest" description="Disordered" evidence="3">
    <location>
        <begin position="1"/>
        <end position="95"/>
    </location>
</feature>
<feature type="region of interest" description="Disordered" evidence="3">
    <location>
        <begin position="205"/>
        <end position="312"/>
    </location>
</feature>
<feature type="region of interest" description="Disordered" evidence="3">
    <location>
        <begin position="426"/>
        <end position="451"/>
    </location>
</feature>
<feature type="compositionally biased region" description="Polar residues" evidence="3">
    <location>
        <begin position="18"/>
        <end position="28"/>
    </location>
</feature>
<feature type="compositionally biased region" description="Polar residues" evidence="3">
    <location>
        <begin position="40"/>
        <end position="62"/>
    </location>
</feature>
<feature type="compositionally biased region" description="Polar residues" evidence="3">
    <location>
        <begin position="205"/>
        <end position="217"/>
    </location>
</feature>
<feature type="compositionally biased region" description="Low complexity" evidence="3">
    <location>
        <begin position="267"/>
        <end position="283"/>
    </location>
</feature>
<feature type="compositionally biased region" description="Basic and acidic residues" evidence="3">
    <location>
        <begin position="427"/>
        <end position="445"/>
    </location>
</feature>
<keyword id="KW-0963">Cytoplasm</keyword>
<keyword id="KW-0539">Nucleus</keyword>
<keyword id="KW-0749">Sporulation</keyword>
<keyword id="KW-0804">Transcription</keyword>
<keyword id="KW-0805">Transcription regulation</keyword>
<accession>L0PQJ9</accession>
<comment type="function">
    <text evidence="1 4 5 6">Component of the velvet transcription factor complex that controls sexual/asexual developmental ratio in response to light, promoting sexual development in the darkness while stimulating asexual sporulation under illumination (By similarity). The velvet complex acts as a global regulator for secondary metabolite gene expression (By similarity). Component of the VEL2-VOS1 heterodimeric complex that plays a dual role in activating genes associated with spore maturation and repressing certain development-associated genes (By similarity). The VEL2-VOS1 complex binds DNA through the DNA-binding domain of VOS1 that recognizes an 11-nucleotide consensus sequence 5'-CTGGCCGCGGC-3' consisting of two motifs in the promoters of key developmental regulatory genes (By similarity). Controls the expression of the oxalic acid and melanin gene clusters (PubMed:23118899, PubMed:23147398). Involved in the resistance to oxidative stress (PubMed:23147398). Required for full virulence (PubMed:23118899, PubMed:23147398).</text>
</comment>
<comment type="subunit">
    <text evidence="1 6">Component of the heterotrimeric velvet complex composed of LAE1, VEL1 and VEL2; VEL1 acting as a bridging protein between LAE1 and VEL2 (PubMed:25625818). Forms a heterodimeric complex with VOS1; the formation of the VEL2-VOS1 complex is light-dependent (By similarity).</text>
</comment>
<comment type="subcellular location">
    <subcellularLocation>
        <location evidence="1">Nucleus</location>
    </subcellularLocation>
    <subcellularLocation>
        <location evidence="1">Cytoplasm</location>
    </subcellularLocation>
    <text evidence="1">Nuclear localization is mediated by VEL1 (By similarity).</text>
</comment>
<comment type="disruption phenotype">
    <text evidence="4 5">Leads to light-independent conidiation, loss of sclerotial development and oxalic acid production, and reduced virulence on several host plants (PubMed:23118899, PubMed:25625818). Increases conidiation and melanin biosynthesis (PubMed:23147398).</text>
</comment>
<comment type="similarity">
    <text evidence="9">Belongs to the velvet family. VelB subfamily.</text>
</comment>